<name>TP1A_RANIT</name>
<protein>
    <recommendedName>
        <fullName evidence="2">Temporin-1ITa</fullName>
    </recommendedName>
</protein>
<reference evidence="3" key="1">
    <citation type="journal article" date="2017" name="J. Pept. Sci.">
        <title>Cytotoxic peptides with insulin-releasing activities from skin secretions of the Italian stream frog Rana italica (Ranidae).</title>
        <authorList>
            <person name="Conlon J.M."/>
            <person name="Musale V."/>
            <person name="Attoub S."/>
            <person name="Mangoni M.L."/>
            <person name="Leprince J."/>
            <person name="Coquet L."/>
            <person name="Jouenne T."/>
            <person name="Abdel-Wahab Y.H.A."/>
            <person name="Flatt P.R."/>
            <person name="Rinaldi A.C."/>
        </authorList>
    </citation>
    <scope>PROTEIN SEQUENCE</scope>
    <scope>FUNCTION</scope>
    <scope>SUBCELLULAR LOCATION</scope>
    <scope>MASS SPECTROMETRY</scope>
    <scope>AMIDATION AT LEU-16</scope>
    <source>
        <tissue evidence="2">Skin secretion</tissue>
    </source>
</reference>
<evidence type="ECO:0000269" key="1">
    <source>
    </source>
</evidence>
<evidence type="ECO:0000303" key="2">
    <source>
    </source>
</evidence>
<evidence type="ECO:0000305" key="3"/>
<evidence type="ECO:0000305" key="4">
    <source>
    </source>
</evidence>
<feature type="peptide" id="PRO_0000442264" description="Temporin-1ITa" evidence="1">
    <location>
        <begin position="1"/>
        <end position="16"/>
    </location>
</feature>
<feature type="modified residue" description="Leucine amide" evidence="1">
    <location>
        <position position="16"/>
    </location>
</feature>
<comment type="function">
    <text evidence="1">Antimicrobial peptide active against Gram-positive bacterium S.epidermidis ATCC 12228 (MIC=8 uM) and against yeast C.parapsilosis ATCC 22019 (MIC=64 uM) but not against Gram-negative bacterium E.coli ATCC 25922. Has hemolytic and cytotoxic activity.</text>
</comment>
<comment type="subcellular location">
    <subcellularLocation>
        <location evidence="1">Secreted</location>
    </subcellularLocation>
</comment>
<comment type="tissue specificity">
    <text evidence="4">Expressed by the skin glands.</text>
</comment>
<comment type="mass spectrometry"/>
<comment type="similarity">
    <text evidence="3">Belongs to the frog skin active peptide (FSAP) family. Temporin subfamily.</text>
</comment>
<organism evidence="2">
    <name type="scientific">Rana italica</name>
    <name type="common">Italian stream frog</name>
    <name type="synonym">Rana graeca italica</name>
    <dbReference type="NCBI Taxonomy" id="147302"/>
    <lineage>
        <taxon>Eukaryota</taxon>
        <taxon>Metazoa</taxon>
        <taxon>Chordata</taxon>
        <taxon>Craniata</taxon>
        <taxon>Vertebrata</taxon>
        <taxon>Euteleostomi</taxon>
        <taxon>Amphibia</taxon>
        <taxon>Batrachia</taxon>
        <taxon>Anura</taxon>
        <taxon>Neobatrachia</taxon>
        <taxon>Ranoidea</taxon>
        <taxon>Ranidae</taxon>
        <taxon>Rana</taxon>
        <taxon>Rana</taxon>
    </lineage>
</organism>
<dbReference type="GO" id="GO:0005576">
    <property type="term" value="C:extracellular region"/>
    <property type="evidence" value="ECO:0007669"/>
    <property type="project" value="UniProtKB-SubCell"/>
</dbReference>
<dbReference type="GO" id="GO:0042742">
    <property type="term" value="P:defense response to bacterium"/>
    <property type="evidence" value="ECO:0007669"/>
    <property type="project" value="UniProtKB-KW"/>
</dbReference>
<dbReference type="GO" id="GO:0050832">
    <property type="term" value="P:defense response to fungus"/>
    <property type="evidence" value="ECO:0007669"/>
    <property type="project" value="UniProtKB-KW"/>
</dbReference>
<dbReference type="GO" id="GO:0031640">
    <property type="term" value="P:killing of cells of another organism"/>
    <property type="evidence" value="ECO:0007669"/>
    <property type="project" value="UniProtKB-KW"/>
</dbReference>
<proteinExistence type="evidence at protein level"/>
<sequence>FLGAIAQALTSLLGKL</sequence>
<keyword id="KW-0027">Amidation</keyword>
<keyword id="KW-0878">Amphibian defense peptide</keyword>
<keyword id="KW-0044">Antibiotic</keyword>
<keyword id="KW-0929">Antimicrobial</keyword>
<keyword id="KW-0204">Cytolysis</keyword>
<keyword id="KW-0903">Direct protein sequencing</keyword>
<keyword id="KW-0295">Fungicide</keyword>
<keyword id="KW-0354">Hemolysis</keyword>
<keyword id="KW-0964">Secreted</keyword>
<accession>C0HL49</accession>